<dbReference type="EC" id="3.4.22.52" evidence="2"/>
<dbReference type="EMBL" id="AF248054">
    <property type="protein sequence ID" value="AAF64504.2"/>
    <property type="molecule type" value="Genomic_DNA"/>
</dbReference>
<dbReference type="EMBL" id="AF252504">
    <property type="protein sequence ID" value="AAF64504.2"/>
    <property type="status" value="JOINED"/>
    <property type="molecule type" value="Genomic_DNA"/>
</dbReference>
<dbReference type="EMBL" id="AF221129">
    <property type="protein sequence ID" value="AAF32364.1"/>
    <property type="molecule type" value="mRNA"/>
</dbReference>
<dbReference type="EMBL" id="BC123635">
    <property type="protein sequence ID" value="AAI23636.1"/>
    <property type="molecule type" value="mRNA"/>
</dbReference>
<dbReference type="EMBL" id="U07849">
    <property type="protein sequence ID" value="AAA18454.1"/>
    <property type="status" value="ALT_FRAME"/>
    <property type="molecule type" value="mRNA"/>
</dbReference>
<dbReference type="PIR" id="S16181">
    <property type="entry name" value="S16181"/>
</dbReference>
<dbReference type="RefSeq" id="NP_776684.1">
    <property type="nucleotide sequence ID" value="NM_174259.2"/>
</dbReference>
<dbReference type="SMR" id="Q27970"/>
<dbReference type="FunCoup" id="Q27970">
    <property type="interactions" value="1023"/>
</dbReference>
<dbReference type="IntAct" id="Q27970">
    <property type="interactions" value="1"/>
</dbReference>
<dbReference type="MINT" id="Q27970"/>
<dbReference type="STRING" id="9913.ENSBTAP00000011678"/>
<dbReference type="MEROPS" id="C02.001"/>
<dbReference type="PaxDb" id="9913-ENSBTAP00000011678"/>
<dbReference type="PeptideAtlas" id="Q27970"/>
<dbReference type="GeneID" id="281661"/>
<dbReference type="KEGG" id="bta:281661"/>
<dbReference type="CTD" id="823"/>
<dbReference type="eggNOG" id="KOG0045">
    <property type="taxonomic scope" value="Eukaryota"/>
</dbReference>
<dbReference type="HOGENOM" id="CLU_010982_0_1_1"/>
<dbReference type="InParanoid" id="Q27970"/>
<dbReference type="OrthoDB" id="424753at2759"/>
<dbReference type="TreeFam" id="TF314748"/>
<dbReference type="Proteomes" id="UP000009136">
    <property type="component" value="Unplaced"/>
</dbReference>
<dbReference type="GO" id="GO:0005737">
    <property type="term" value="C:cytoplasm"/>
    <property type="evidence" value="ECO:0000318"/>
    <property type="project" value="GO_Central"/>
</dbReference>
<dbReference type="GO" id="GO:0005829">
    <property type="term" value="C:cytosol"/>
    <property type="evidence" value="ECO:0000250"/>
    <property type="project" value="UniProtKB"/>
</dbReference>
<dbReference type="GO" id="GO:0005886">
    <property type="term" value="C:plasma membrane"/>
    <property type="evidence" value="ECO:0000250"/>
    <property type="project" value="UniProtKB"/>
</dbReference>
<dbReference type="GO" id="GO:0005509">
    <property type="term" value="F:calcium ion binding"/>
    <property type="evidence" value="ECO:0000250"/>
    <property type="project" value="UniProtKB"/>
</dbReference>
<dbReference type="GO" id="GO:0004198">
    <property type="term" value="F:calcium-dependent cysteine-type endopeptidase activity"/>
    <property type="evidence" value="ECO:0000250"/>
    <property type="project" value="UniProtKB"/>
</dbReference>
<dbReference type="GO" id="GO:0008233">
    <property type="term" value="F:peptidase activity"/>
    <property type="evidence" value="ECO:0000250"/>
    <property type="project" value="UniProtKB"/>
</dbReference>
<dbReference type="GO" id="GO:0006508">
    <property type="term" value="P:proteolysis"/>
    <property type="evidence" value="ECO:0000250"/>
    <property type="project" value="UniProtKB"/>
</dbReference>
<dbReference type="GO" id="GO:0050790">
    <property type="term" value="P:regulation of catalytic activity"/>
    <property type="evidence" value="ECO:0000250"/>
    <property type="project" value="UniProtKB"/>
</dbReference>
<dbReference type="GO" id="GO:0097264">
    <property type="term" value="P:self proteolysis"/>
    <property type="evidence" value="ECO:0000250"/>
    <property type="project" value="UniProtKB"/>
</dbReference>
<dbReference type="CDD" id="cd00214">
    <property type="entry name" value="Calpain_III"/>
    <property type="match status" value="1"/>
</dbReference>
<dbReference type="CDD" id="cd00044">
    <property type="entry name" value="CysPc"/>
    <property type="match status" value="1"/>
</dbReference>
<dbReference type="CDD" id="cd16198">
    <property type="entry name" value="EFh_PEF_CAPN1"/>
    <property type="match status" value="1"/>
</dbReference>
<dbReference type="FunFam" id="1.10.238.10:FF:000124">
    <property type="entry name" value="Calpain-1 catalytic subunit"/>
    <property type="match status" value="1"/>
</dbReference>
<dbReference type="FunFam" id="2.60.120.380:FF:000001">
    <property type="entry name" value="Calpain-1 catalytic subunit"/>
    <property type="match status" value="1"/>
</dbReference>
<dbReference type="FunFam" id="3.90.70.10:FF:000001">
    <property type="entry name" value="Calpain-1 catalytic subunit"/>
    <property type="match status" value="1"/>
</dbReference>
<dbReference type="Gene3D" id="2.60.120.380">
    <property type="match status" value="1"/>
</dbReference>
<dbReference type="Gene3D" id="3.90.70.10">
    <property type="entry name" value="Cysteine proteinases"/>
    <property type="match status" value="1"/>
</dbReference>
<dbReference type="Gene3D" id="1.10.238.10">
    <property type="entry name" value="EF-hand"/>
    <property type="match status" value="1"/>
</dbReference>
<dbReference type="InterPro" id="IPR033883">
    <property type="entry name" value="C2_III"/>
</dbReference>
<dbReference type="InterPro" id="IPR022684">
    <property type="entry name" value="Calpain_cysteine_protease"/>
</dbReference>
<dbReference type="InterPro" id="IPR022682">
    <property type="entry name" value="Calpain_domain_III"/>
</dbReference>
<dbReference type="InterPro" id="IPR022683">
    <property type="entry name" value="Calpain_III"/>
</dbReference>
<dbReference type="InterPro" id="IPR036213">
    <property type="entry name" value="Calpain_III_sf"/>
</dbReference>
<dbReference type="InterPro" id="IPR011992">
    <property type="entry name" value="EF-hand-dom_pair"/>
</dbReference>
<dbReference type="InterPro" id="IPR018247">
    <property type="entry name" value="EF_Hand_1_Ca_BS"/>
</dbReference>
<dbReference type="InterPro" id="IPR002048">
    <property type="entry name" value="EF_hand_dom"/>
</dbReference>
<dbReference type="InterPro" id="IPR038765">
    <property type="entry name" value="Papain-like_cys_pep_sf"/>
</dbReference>
<dbReference type="InterPro" id="IPR000169">
    <property type="entry name" value="Pept_cys_AS"/>
</dbReference>
<dbReference type="InterPro" id="IPR001300">
    <property type="entry name" value="Peptidase_C2_calpain_cat"/>
</dbReference>
<dbReference type="PANTHER" id="PTHR10183">
    <property type="entry name" value="CALPAIN"/>
    <property type="match status" value="1"/>
</dbReference>
<dbReference type="PANTHER" id="PTHR10183:SF284">
    <property type="entry name" value="CALPAIN-1 CATALYTIC SUBUNIT"/>
    <property type="match status" value="1"/>
</dbReference>
<dbReference type="Pfam" id="PF01067">
    <property type="entry name" value="Calpain_III"/>
    <property type="match status" value="1"/>
</dbReference>
<dbReference type="Pfam" id="PF13833">
    <property type="entry name" value="EF-hand_8"/>
    <property type="match status" value="1"/>
</dbReference>
<dbReference type="Pfam" id="PF00648">
    <property type="entry name" value="Peptidase_C2"/>
    <property type="match status" value="1"/>
</dbReference>
<dbReference type="PRINTS" id="PR00704">
    <property type="entry name" value="CALPAIN"/>
</dbReference>
<dbReference type="SMART" id="SM00720">
    <property type="entry name" value="calpain_III"/>
    <property type="match status" value="1"/>
</dbReference>
<dbReference type="SMART" id="SM00230">
    <property type="entry name" value="CysPc"/>
    <property type="match status" value="1"/>
</dbReference>
<dbReference type="SUPFAM" id="SSF49758">
    <property type="entry name" value="Calpain large subunit, middle domain (domain III)"/>
    <property type="match status" value="1"/>
</dbReference>
<dbReference type="SUPFAM" id="SSF54001">
    <property type="entry name" value="Cysteine proteinases"/>
    <property type="match status" value="1"/>
</dbReference>
<dbReference type="SUPFAM" id="SSF47473">
    <property type="entry name" value="EF-hand"/>
    <property type="match status" value="1"/>
</dbReference>
<dbReference type="PROSITE" id="PS50203">
    <property type="entry name" value="CALPAIN_CAT"/>
    <property type="match status" value="1"/>
</dbReference>
<dbReference type="PROSITE" id="PS00018">
    <property type="entry name" value="EF_HAND_1"/>
    <property type="match status" value="2"/>
</dbReference>
<dbReference type="PROSITE" id="PS50222">
    <property type="entry name" value="EF_HAND_2"/>
    <property type="match status" value="4"/>
</dbReference>
<dbReference type="PROSITE" id="PS00139">
    <property type="entry name" value="THIOL_PROTEASE_CYS"/>
    <property type="match status" value="1"/>
</dbReference>
<proteinExistence type="evidence at protein level"/>
<comment type="function">
    <text evidence="2">Calcium-regulated non-lysosomal thiol-protease which catalyzes limited proteolysis of substrates involved in cytoskeletal remodeling and signal transduction. Proteolytically cleaves CTBP1. Cleaves and activates caspase-7 (CASP7).</text>
</comment>
<comment type="catalytic activity">
    <reaction evidence="2">
        <text>Broad endopeptidase specificity.</text>
        <dbReference type="EC" id="3.4.22.52"/>
    </reaction>
</comment>
<comment type="cofactor">
    <cofactor evidence="2">
        <name>Ca(2+)</name>
        <dbReference type="ChEBI" id="CHEBI:29108"/>
    </cofactor>
    <text evidence="2">Binds 4 Ca(2+) ions.</text>
</comment>
<comment type="activity regulation">
    <text evidence="2">Activated by micromolar concentrations of calcium and inhibited by calpastatin.</text>
</comment>
<comment type="subunit">
    <text evidence="3">Forms a heterodimer with a small (regulatory) subunit CAPNS1.</text>
</comment>
<comment type="subcellular location">
    <subcellularLocation>
        <location evidence="2">Cytoplasm</location>
    </subcellularLocation>
    <subcellularLocation>
        <location evidence="2">Cell membrane</location>
    </subcellularLocation>
    <text evidence="2">Translocates to the plasma membrane upon Ca(2+) binding.</text>
</comment>
<comment type="PTM">
    <text evidence="2">Undergoes calcium-induced successive autoproteolytic cleavages that generate a membrane-bound 78 kDa active form and an intracellular 75 kDa active form. Calpastatin reduces with high efficiency the transition from 78 kDa to 75 kDa calpain forms (By similarity).</text>
</comment>
<comment type="similarity">
    <text evidence="7">Belongs to the peptidase C2 family.</text>
</comment>
<comment type="sequence caution" evidence="7">
    <conflict type="frameshift">
        <sequence resource="EMBL-CDS" id="AAA18454"/>
    </conflict>
</comment>
<reference key="1">
    <citation type="journal article" date="2000" name="J. Anim. Sci.">
        <title>Bovine CAPN1 maps to a region of BTA29 containing a quantitative trait locus for meat tenderness.</title>
        <authorList>
            <person name="Smith T.P.L."/>
            <person name="Casas E."/>
            <person name="Rexroad C.E. III"/>
            <person name="Kappes S.M."/>
            <person name="Keele J.W."/>
        </authorList>
    </citation>
    <scope>NUCLEOTIDE SEQUENCE [GENOMIC DNA]</scope>
</reference>
<reference key="2">
    <citation type="submission" date="2000-01" db="EMBL/GenBank/DDBJ databases">
        <title>Bovine CAPN1 maps to a region containing a QTL for meat tenderness.</title>
        <authorList>
            <person name="Smith T.P.L."/>
            <person name="Casas E."/>
            <person name="Rexroad C.E."/>
            <person name="Kappes S.M."/>
            <person name="Keele J.W."/>
        </authorList>
    </citation>
    <scope>NUCLEOTIDE SEQUENCE [MRNA]</scope>
</reference>
<reference key="3">
    <citation type="submission" date="2006-09" db="EMBL/GenBank/DDBJ databases">
        <authorList>
            <consortium name="NIH - Mammalian Gene Collection (MGC) project"/>
        </authorList>
    </citation>
    <scope>NUCLEOTIDE SEQUENCE [LARGE SCALE MRNA]</scope>
    <source>
        <strain>Hereford</strain>
        <tissue>Fetal muscle</tissue>
    </source>
</reference>
<reference key="4">
    <citation type="submission" date="1994-04" db="EMBL/GenBank/DDBJ databases">
        <authorList>
            <person name="Sun W."/>
            <person name="Bidwell C.A."/>
            <person name="Ji S."/>
            <person name="Hancock D.L."/>
        </authorList>
    </citation>
    <scope>NUCLEOTIDE SEQUENCE [MRNA] OF 530-625</scope>
    <source>
        <tissue>Skeletal muscle</tissue>
    </source>
</reference>
<reference key="5">
    <citation type="journal article" date="1991" name="Biochim. Biophys. Acta">
        <title>Two-stage autolysis of the catalytic subunit initiates activation of calpain I.</title>
        <authorList>
            <person name="Zimmerman U.J."/>
            <person name="Schlaepfer W.W."/>
        </authorList>
    </citation>
    <scope>PROTEIN SEQUENCE OF 16-41</scope>
</reference>
<organism>
    <name type="scientific">Bos taurus</name>
    <name type="common">Bovine</name>
    <dbReference type="NCBI Taxonomy" id="9913"/>
    <lineage>
        <taxon>Eukaryota</taxon>
        <taxon>Metazoa</taxon>
        <taxon>Chordata</taxon>
        <taxon>Craniata</taxon>
        <taxon>Vertebrata</taxon>
        <taxon>Euteleostomi</taxon>
        <taxon>Mammalia</taxon>
        <taxon>Eutheria</taxon>
        <taxon>Laurasiatheria</taxon>
        <taxon>Artiodactyla</taxon>
        <taxon>Ruminantia</taxon>
        <taxon>Pecora</taxon>
        <taxon>Bovidae</taxon>
        <taxon>Bovinae</taxon>
        <taxon>Bos</taxon>
    </lineage>
</organism>
<accession>Q27970</accession>
<accession>Q9N0U3</accession>
<accession>Q9N0V6</accession>
<accession>Q9N185</accession>
<protein>
    <recommendedName>
        <fullName evidence="7">Calpain-1 catalytic subunit</fullName>
        <ecNumber evidence="2">3.4.22.52</ecNumber>
    </recommendedName>
    <alternativeName>
        <fullName evidence="2">Calcium-activated neutral proteinase 1</fullName>
        <shortName evidence="2">CANP 1</shortName>
    </alternativeName>
    <alternativeName>
        <fullName evidence="2">Calpain mu-type</fullName>
    </alternativeName>
    <alternativeName>
        <fullName evidence="2">Calpain-1 large subunit</fullName>
    </alternativeName>
    <alternativeName>
        <fullName evidence="2">Micromolar-calpain</fullName>
        <shortName evidence="2">muCANP</shortName>
    </alternativeName>
</protein>
<gene>
    <name evidence="2 6" type="primary">CAPN1</name>
</gene>
<feature type="chain" id="PRO_0000207693" description="Calpain-1 catalytic subunit">
    <location>
        <begin position="1"/>
        <end position="716"/>
    </location>
</feature>
<feature type="domain" description="Calpain catalytic" evidence="4">
    <location>
        <begin position="55"/>
        <end position="354"/>
    </location>
</feature>
<feature type="domain" description="EF-hand 1" evidence="5">
    <location>
        <begin position="543"/>
        <end position="578"/>
    </location>
</feature>
<feature type="domain" description="EF-hand 2" evidence="5">
    <location>
        <begin position="587"/>
        <end position="620"/>
    </location>
</feature>
<feature type="domain" description="EF-hand 3" evidence="5">
    <location>
        <begin position="617"/>
        <end position="652"/>
    </location>
</feature>
<feature type="domain" description="EF-hand 4" evidence="5">
    <location>
        <begin position="682"/>
        <end position="716"/>
    </location>
</feature>
<feature type="region of interest" description="Domain III">
    <location>
        <begin position="355"/>
        <end position="528"/>
    </location>
</feature>
<feature type="region of interest" description="Linker">
    <location>
        <begin position="529"/>
        <end position="544"/>
    </location>
</feature>
<feature type="region of interest" description="Domain IV">
    <location>
        <begin position="545"/>
        <end position="715"/>
    </location>
</feature>
<feature type="active site" evidence="1">
    <location>
        <position position="115"/>
    </location>
</feature>
<feature type="active site" evidence="1">
    <location>
        <position position="272"/>
    </location>
</feature>
<feature type="active site" evidence="1">
    <location>
        <position position="296"/>
    </location>
</feature>
<feature type="binding site" evidence="7">
    <location>
        <position position="109"/>
    </location>
    <ligand>
        <name>Ca(2+)</name>
        <dbReference type="ChEBI" id="CHEBI:29108"/>
        <label>1</label>
    </ligand>
</feature>
<feature type="binding site" evidence="7">
    <location>
        <position position="114"/>
    </location>
    <ligand>
        <name>Ca(2+)</name>
        <dbReference type="ChEBI" id="CHEBI:29108"/>
        <label>1</label>
    </ligand>
</feature>
<feature type="binding site" evidence="7">
    <location>
        <position position="318"/>
    </location>
    <ligand>
        <name>Ca(2+)</name>
        <dbReference type="ChEBI" id="CHEBI:29108"/>
        <label>2</label>
    </ligand>
</feature>
<feature type="binding site" evidence="7">
    <location>
        <position position="323"/>
    </location>
    <ligand>
        <name>Ca(2+)</name>
        <dbReference type="ChEBI" id="CHEBI:29108"/>
        <label>2</label>
    </ligand>
</feature>
<feature type="binding site" evidence="5">
    <location>
        <position position="600"/>
    </location>
    <ligand>
        <name>Ca(2+)</name>
        <dbReference type="ChEBI" id="CHEBI:29108"/>
        <label>3</label>
    </ligand>
</feature>
<feature type="binding site" evidence="5">
    <location>
        <position position="602"/>
    </location>
    <ligand>
        <name>Ca(2+)</name>
        <dbReference type="ChEBI" id="CHEBI:29108"/>
        <label>3</label>
    </ligand>
</feature>
<feature type="binding site" evidence="5">
    <location>
        <position position="604"/>
    </location>
    <ligand>
        <name>Ca(2+)</name>
        <dbReference type="ChEBI" id="CHEBI:29108"/>
        <label>3</label>
    </ligand>
</feature>
<feature type="binding site" evidence="5">
    <location>
        <position position="606"/>
    </location>
    <ligand>
        <name>Ca(2+)</name>
        <dbReference type="ChEBI" id="CHEBI:29108"/>
        <label>3</label>
    </ligand>
</feature>
<feature type="binding site" evidence="5">
    <location>
        <position position="611"/>
    </location>
    <ligand>
        <name>Ca(2+)</name>
        <dbReference type="ChEBI" id="CHEBI:29108"/>
        <label>3</label>
    </ligand>
</feature>
<feature type="binding site" evidence="5">
    <location>
        <position position="630"/>
    </location>
    <ligand>
        <name>Ca(2+)</name>
        <dbReference type="ChEBI" id="CHEBI:29108"/>
        <label>4</label>
    </ligand>
</feature>
<feature type="binding site" evidence="5">
    <location>
        <position position="632"/>
    </location>
    <ligand>
        <name>Ca(2+)</name>
        <dbReference type="ChEBI" id="CHEBI:29108"/>
        <label>4</label>
    </ligand>
</feature>
<feature type="binding site" evidence="5">
    <location>
        <position position="634"/>
    </location>
    <ligand>
        <name>Ca(2+)</name>
        <dbReference type="ChEBI" id="CHEBI:29108"/>
        <label>4</label>
    </ligand>
</feature>
<feature type="binding site" evidence="5">
    <location>
        <position position="636"/>
    </location>
    <ligand>
        <name>Ca(2+)</name>
        <dbReference type="ChEBI" id="CHEBI:29108"/>
        <label>4</label>
    </ligand>
</feature>
<feature type="binding site" evidence="5">
    <location>
        <position position="641"/>
    </location>
    <ligand>
        <name>Ca(2+)</name>
        <dbReference type="ChEBI" id="CHEBI:29108"/>
        <label>4</label>
    </ligand>
</feature>
<feature type="site" description="Cleavage; for 78 kDa form" evidence="1">
    <location>
        <begin position="15"/>
        <end position="16"/>
    </location>
</feature>
<feature type="site" description="Cleavage; for 75 kDa form" evidence="1">
    <location>
        <begin position="27"/>
        <end position="28"/>
    </location>
</feature>
<feature type="modified residue" description="Phosphothreonine" evidence="2">
    <location>
        <position position="354"/>
    </location>
</feature>
<feature type="sequence conflict" description="In Ref. 5; AA sequence." evidence="7" ref="5">
    <original>Q</original>
    <variation>T</variation>
    <location>
        <position position="21"/>
    </location>
</feature>
<feature type="sequence conflict" description="In Ref. 1; AAF64504." evidence="7" ref="1">
    <original>G</original>
    <variation>A</variation>
    <location>
        <position position="316"/>
    </location>
</feature>
<feature type="sequence conflict" description="In Ref. 1; AAF64504." evidence="7" ref="1">
    <original>A</original>
    <variation>V</variation>
    <location>
        <position position="381"/>
    </location>
</feature>
<feature type="sequence conflict" description="In Ref. 4; AAA18454." evidence="7" ref="4">
    <original>V</original>
    <variation>I</variation>
    <location>
        <position position="530"/>
    </location>
</feature>
<feature type="sequence conflict" description="In Ref. 4; AAA18454." evidence="7" ref="4">
    <original>S</original>
    <variation>A</variation>
    <location>
        <position position="624"/>
    </location>
</feature>
<keyword id="KW-0068">Autocatalytic cleavage</keyword>
<keyword id="KW-0106">Calcium</keyword>
<keyword id="KW-1003">Cell membrane</keyword>
<keyword id="KW-0963">Cytoplasm</keyword>
<keyword id="KW-0903">Direct protein sequencing</keyword>
<keyword id="KW-0378">Hydrolase</keyword>
<keyword id="KW-0472">Membrane</keyword>
<keyword id="KW-0479">Metal-binding</keyword>
<keyword id="KW-0597">Phosphoprotein</keyword>
<keyword id="KW-0645">Protease</keyword>
<keyword id="KW-1185">Reference proteome</keyword>
<keyword id="KW-0677">Repeat</keyword>
<keyword id="KW-0788">Thiol protease</keyword>
<name>CAN1_BOVIN</name>
<sequence length="716" mass="82207">MAEEFITPVYCTGVSAQVQKQRAKELGLGRHENAIKYLGQDYEQLRVHCLQRGALFRDEAFPPVPQSLGFKELGPNSSKTYGIKWKRPTELFSNPQFIVDGATRTDICQGALGDCWLLAAIASLTLNDTLLHRVVPHGQSFQDGYAGIFHFQLWQFGEWVDVVVDDLLPTKDGKLVFVHSAQGNEFWSALLEKAYAKVNGSYEALSGGSTSEGFEDFTGGVTEWYELRKAPSDLYNIILKALERGSLLGCSIDISSILDMEAVTFKKLVKGHAYSVTGAKQVNYQGQMVNLIRMRNPWGEVEWTGAWSDGSSEWNGVDPYMREQLRVKMEDGEFWMSFRDFMREFTRLEICNLTPDALKSQRFRNWNTTLYEGTWRRGSTAGGCRNYPATFWVNPQFKIRLEETDDPDPDDYGGRESGCSFLLALMQKHRRRERRFGRDMETIGFAVYEVPPELMGQPAVHLKRDFFLSNASRARSEQFINLREVSTRFRLPPGEYVVVPSTFEPNKEGDFVLRFFSEKSAGTQELDDQVQANLPDEQVLSEEEIDENFKSLFRQLAGEDMEISVKELRTILNRIISKHKDLRTTGFSLESCRSMVNLMDRDGNGKLGLVEFNILWNRIRNYLSIFRKFDLDKSGSMSAYEMRMAIEFAGFKLNKKLYELIITRYSEPDLAVDFDNFVCCLVRLETMFRFFKTLDTDLDGVVTFDLFKWLQLTMFA</sequence>
<evidence type="ECO:0000250" key="1"/>
<evidence type="ECO:0000250" key="2">
    <source>
        <dbReference type="UniProtKB" id="P07384"/>
    </source>
</evidence>
<evidence type="ECO:0000250" key="3">
    <source>
        <dbReference type="UniProtKB" id="P97571"/>
    </source>
</evidence>
<evidence type="ECO:0000255" key="4">
    <source>
        <dbReference type="PROSITE-ProRule" id="PRU00239"/>
    </source>
</evidence>
<evidence type="ECO:0000255" key="5">
    <source>
        <dbReference type="PROSITE-ProRule" id="PRU00448"/>
    </source>
</evidence>
<evidence type="ECO:0000303" key="6">
    <source>
    </source>
</evidence>
<evidence type="ECO:0000305" key="7"/>